<protein>
    <recommendedName>
        <fullName evidence="1">Deoxyguanosinetriphosphate triphosphohydrolase-like protein</fullName>
    </recommendedName>
</protein>
<feature type="chain" id="PRO_1000066415" description="Deoxyguanosinetriphosphate triphosphohydrolase-like protein">
    <location>
        <begin position="1"/>
        <end position="402"/>
    </location>
</feature>
<feature type="domain" description="HD" evidence="2">
    <location>
        <begin position="73"/>
        <end position="217"/>
    </location>
</feature>
<feature type="region of interest" description="Disordered" evidence="3">
    <location>
        <begin position="20"/>
        <end position="39"/>
    </location>
</feature>
<keyword id="KW-0378">Hydrolase</keyword>
<reference key="1">
    <citation type="journal article" date="2009" name="PLoS ONE">
        <title>Genome degradation in Brucella ovis corresponds with narrowing of its host range and tissue tropism.</title>
        <authorList>
            <person name="Tsolis R.M."/>
            <person name="Seshadri R."/>
            <person name="Santos R.L."/>
            <person name="Sangari F.J."/>
            <person name="Lobo J.M."/>
            <person name="de Jong M.F."/>
            <person name="Ren Q."/>
            <person name="Myers G."/>
            <person name="Brinkac L.M."/>
            <person name="Nelson W.C."/>
            <person name="Deboy R.T."/>
            <person name="Angiuoli S."/>
            <person name="Khouri H."/>
            <person name="Dimitrov G."/>
            <person name="Robinson J.R."/>
            <person name="Mulligan S."/>
            <person name="Walker R.L."/>
            <person name="Elzer P.E."/>
            <person name="Hassan K.A."/>
            <person name="Paulsen I.T."/>
        </authorList>
    </citation>
    <scope>NUCLEOTIDE SEQUENCE [LARGE SCALE GENOMIC DNA]</scope>
    <source>
        <strain>ATCC 25840 / 63/290 / NCTC 10512</strain>
    </source>
</reference>
<name>DGTL1_BRUO2</name>
<proteinExistence type="inferred from homology"/>
<gene>
    <name type="ordered locus">BOV_0867</name>
</gene>
<evidence type="ECO:0000255" key="1">
    <source>
        <dbReference type="HAMAP-Rule" id="MF_01212"/>
    </source>
</evidence>
<evidence type="ECO:0000255" key="2">
    <source>
        <dbReference type="PROSITE-ProRule" id="PRU01175"/>
    </source>
</evidence>
<evidence type="ECO:0000256" key="3">
    <source>
        <dbReference type="SAM" id="MobiDB-lite"/>
    </source>
</evidence>
<accession>A5VQ53</accession>
<sequence length="402" mass="45728">MSLEGIGFGYRERAPYASNPAFSRGRLVPEPESPTRTPFQRDRDRIIHSTAFRRLKHKTQVFIAHEGDHYRTRLTHTIEVAQIARALARALRLDEDLAEAVALVHDFGHTPFGHTGEDALNERMENFGGFDHNAQSLRIVTKLEHRYADFDGLNLSWETLEGLVKHNGPLLGPYAAHPDIPVPQPILDFNARYDLELSRFASLEAQCAAIADDIAYNAHDIDDGLRAGLLTLESLDEVPLAKRLLDIVRTRYPNLDPVRTGHELVRRQITIMVEDVIEEAQRRLASARPGTMEDVHNQPRALVGFSDAMRAEEKVLKRFLFKNLYFHESVVVRRHAADRIVQDLFDACFTDPSLMPDEWRLGCEALDKAALARRVADYLAGMTDNYAVREHRRLFDRTPDLA</sequence>
<comment type="similarity">
    <text evidence="1">Belongs to the dGTPase family. Type 2 subfamily.</text>
</comment>
<dbReference type="EMBL" id="CP000708">
    <property type="protein sequence ID" value="ABQ61133.1"/>
    <property type="molecule type" value="Genomic_DNA"/>
</dbReference>
<dbReference type="RefSeq" id="WP_006012306.1">
    <property type="nucleotide sequence ID" value="NC_009505.1"/>
</dbReference>
<dbReference type="SMR" id="A5VQ53"/>
<dbReference type="GeneID" id="45124302"/>
<dbReference type="KEGG" id="bov:BOV_0867"/>
<dbReference type="HOGENOM" id="CLU_028163_1_0_5"/>
<dbReference type="PhylomeDB" id="A5VQ53"/>
<dbReference type="Proteomes" id="UP000006383">
    <property type="component" value="Chromosome I"/>
</dbReference>
<dbReference type="GO" id="GO:0008832">
    <property type="term" value="F:dGTPase activity"/>
    <property type="evidence" value="ECO:0007669"/>
    <property type="project" value="TreeGrafter"/>
</dbReference>
<dbReference type="GO" id="GO:0006203">
    <property type="term" value="P:dGTP catabolic process"/>
    <property type="evidence" value="ECO:0007669"/>
    <property type="project" value="TreeGrafter"/>
</dbReference>
<dbReference type="CDD" id="cd00077">
    <property type="entry name" value="HDc"/>
    <property type="match status" value="1"/>
</dbReference>
<dbReference type="Gene3D" id="1.10.3210.10">
    <property type="entry name" value="Hypothetical protein af1432"/>
    <property type="match status" value="1"/>
</dbReference>
<dbReference type="HAMAP" id="MF_01212">
    <property type="entry name" value="dGTPase_type2"/>
    <property type="match status" value="1"/>
</dbReference>
<dbReference type="InterPro" id="IPR006261">
    <property type="entry name" value="dGTPase"/>
</dbReference>
<dbReference type="InterPro" id="IPR050135">
    <property type="entry name" value="dGTPase-like"/>
</dbReference>
<dbReference type="InterPro" id="IPR023023">
    <property type="entry name" value="dNTPase_2"/>
</dbReference>
<dbReference type="InterPro" id="IPR003607">
    <property type="entry name" value="HD/PDEase_dom"/>
</dbReference>
<dbReference type="InterPro" id="IPR006674">
    <property type="entry name" value="HD_domain"/>
</dbReference>
<dbReference type="InterPro" id="IPR006675">
    <property type="entry name" value="HDIG_dom"/>
</dbReference>
<dbReference type="InterPro" id="IPR026875">
    <property type="entry name" value="PHydrolase_assoc_dom"/>
</dbReference>
<dbReference type="NCBIfam" id="TIGR01353">
    <property type="entry name" value="dGTP_triPase"/>
    <property type="match status" value="1"/>
</dbReference>
<dbReference type="NCBIfam" id="TIGR00277">
    <property type="entry name" value="HDIG"/>
    <property type="match status" value="1"/>
</dbReference>
<dbReference type="NCBIfam" id="NF002326">
    <property type="entry name" value="PRK01286.1-1"/>
    <property type="match status" value="1"/>
</dbReference>
<dbReference type="NCBIfam" id="NF002328">
    <property type="entry name" value="PRK01286.1-3"/>
    <property type="match status" value="1"/>
</dbReference>
<dbReference type="PANTHER" id="PTHR11373:SF43">
    <property type="entry name" value="DEOXYGUANOSINETRIPHOSPHATE TRIPHOSPHOHYDROLASE-LIKE PROTEIN"/>
    <property type="match status" value="1"/>
</dbReference>
<dbReference type="PANTHER" id="PTHR11373">
    <property type="entry name" value="DEOXYNUCLEOSIDE TRIPHOSPHATE TRIPHOSPHOHYDROLASE"/>
    <property type="match status" value="1"/>
</dbReference>
<dbReference type="Pfam" id="PF01966">
    <property type="entry name" value="HD"/>
    <property type="match status" value="1"/>
</dbReference>
<dbReference type="Pfam" id="PF13286">
    <property type="entry name" value="HD_assoc"/>
    <property type="match status" value="1"/>
</dbReference>
<dbReference type="SMART" id="SM00471">
    <property type="entry name" value="HDc"/>
    <property type="match status" value="1"/>
</dbReference>
<dbReference type="SUPFAM" id="SSF109604">
    <property type="entry name" value="HD-domain/PDEase-like"/>
    <property type="match status" value="1"/>
</dbReference>
<dbReference type="PROSITE" id="PS51831">
    <property type="entry name" value="HD"/>
    <property type="match status" value="1"/>
</dbReference>
<organism>
    <name type="scientific">Brucella ovis (strain ATCC 25840 / 63/290 / NCTC 10512)</name>
    <dbReference type="NCBI Taxonomy" id="444178"/>
    <lineage>
        <taxon>Bacteria</taxon>
        <taxon>Pseudomonadati</taxon>
        <taxon>Pseudomonadota</taxon>
        <taxon>Alphaproteobacteria</taxon>
        <taxon>Hyphomicrobiales</taxon>
        <taxon>Brucellaceae</taxon>
        <taxon>Brucella/Ochrobactrum group</taxon>
        <taxon>Brucella</taxon>
    </lineage>
</organism>